<protein>
    <recommendedName>
        <fullName evidence="1">Probable alpha-L-glutamate ligase</fullName>
        <ecNumber evidence="1">6.3.2.-</ecNumber>
    </recommendedName>
</protein>
<comment type="cofactor">
    <cofactor evidence="1">
        <name>Mg(2+)</name>
        <dbReference type="ChEBI" id="CHEBI:18420"/>
    </cofactor>
    <cofactor evidence="1">
        <name>Mn(2+)</name>
        <dbReference type="ChEBI" id="CHEBI:29035"/>
    </cofactor>
    <text evidence="1">Binds 2 magnesium or manganese ions per subunit.</text>
</comment>
<comment type="similarity">
    <text evidence="1">Belongs to the RimK family.</text>
</comment>
<dbReference type="EC" id="6.3.2.-" evidence="1"/>
<dbReference type="EMBL" id="AM039952">
    <property type="protein sequence ID" value="CAJ25098.1"/>
    <property type="molecule type" value="Genomic_DNA"/>
</dbReference>
<dbReference type="SMR" id="Q3BQ65"/>
<dbReference type="STRING" id="456327.BJD11_05935"/>
<dbReference type="KEGG" id="xcv:XCV3367"/>
<dbReference type="eggNOG" id="COG0189">
    <property type="taxonomic scope" value="Bacteria"/>
</dbReference>
<dbReference type="HOGENOM" id="CLU_054353_0_1_6"/>
<dbReference type="Proteomes" id="UP000007069">
    <property type="component" value="Chromosome"/>
</dbReference>
<dbReference type="GO" id="GO:0005737">
    <property type="term" value="C:cytoplasm"/>
    <property type="evidence" value="ECO:0007669"/>
    <property type="project" value="TreeGrafter"/>
</dbReference>
<dbReference type="GO" id="GO:0005524">
    <property type="term" value="F:ATP binding"/>
    <property type="evidence" value="ECO:0007669"/>
    <property type="project" value="UniProtKB-UniRule"/>
</dbReference>
<dbReference type="GO" id="GO:0046872">
    <property type="term" value="F:metal ion binding"/>
    <property type="evidence" value="ECO:0007669"/>
    <property type="project" value="UniProtKB-KW"/>
</dbReference>
<dbReference type="GO" id="GO:0018169">
    <property type="term" value="F:ribosomal S6-glutamic acid ligase activity"/>
    <property type="evidence" value="ECO:0007669"/>
    <property type="project" value="TreeGrafter"/>
</dbReference>
<dbReference type="GO" id="GO:0036211">
    <property type="term" value="P:protein modification process"/>
    <property type="evidence" value="ECO:0007669"/>
    <property type="project" value="InterPro"/>
</dbReference>
<dbReference type="GO" id="GO:0009432">
    <property type="term" value="P:SOS response"/>
    <property type="evidence" value="ECO:0007669"/>
    <property type="project" value="TreeGrafter"/>
</dbReference>
<dbReference type="GO" id="GO:0006412">
    <property type="term" value="P:translation"/>
    <property type="evidence" value="ECO:0007669"/>
    <property type="project" value="UniProtKB-KW"/>
</dbReference>
<dbReference type="FunFam" id="3.40.50.20:FF:000004">
    <property type="entry name" value="Probable alpha-L-glutamate ligase"/>
    <property type="match status" value="1"/>
</dbReference>
<dbReference type="FunFam" id="3.30.1490.20:FF:000005">
    <property type="entry name" value="Probable alpha-L-glutamate ligase 1"/>
    <property type="match status" value="1"/>
</dbReference>
<dbReference type="Gene3D" id="3.40.50.20">
    <property type="match status" value="1"/>
</dbReference>
<dbReference type="Gene3D" id="3.30.1490.20">
    <property type="entry name" value="ATP-grasp fold, A domain"/>
    <property type="match status" value="1"/>
</dbReference>
<dbReference type="Gene3D" id="3.30.470.20">
    <property type="entry name" value="ATP-grasp fold, B domain"/>
    <property type="match status" value="1"/>
</dbReference>
<dbReference type="HAMAP" id="MF_01552">
    <property type="entry name" value="RimK"/>
    <property type="match status" value="1"/>
</dbReference>
<dbReference type="InterPro" id="IPR011761">
    <property type="entry name" value="ATP-grasp"/>
</dbReference>
<dbReference type="InterPro" id="IPR013651">
    <property type="entry name" value="ATP-grasp_RimK-type"/>
</dbReference>
<dbReference type="InterPro" id="IPR013815">
    <property type="entry name" value="ATP_grasp_subdomain_1"/>
</dbReference>
<dbReference type="InterPro" id="IPR023533">
    <property type="entry name" value="RimK"/>
</dbReference>
<dbReference type="InterPro" id="IPR041107">
    <property type="entry name" value="Rimk_N"/>
</dbReference>
<dbReference type="InterPro" id="IPR004666">
    <property type="entry name" value="Rp_bS6_RimK/Lys_biosynth_LsyX"/>
</dbReference>
<dbReference type="NCBIfam" id="NF007764">
    <property type="entry name" value="PRK10446.1"/>
    <property type="match status" value="1"/>
</dbReference>
<dbReference type="NCBIfam" id="TIGR00768">
    <property type="entry name" value="rimK_fam"/>
    <property type="match status" value="1"/>
</dbReference>
<dbReference type="PANTHER" id="PTHR21621:SF7">
    <property type="entry name" value="RIBOSOMAL PROTEIN BS6--L-GLUTAMATE LIGASE"/>
    <property type="match status" value="1"/>
</dbReference>
<dbReference type="PANTHER" id="PTHR21621">
    <property type="entry name" value="RIBOSOMAL PROTEIN S6 MODIFICATION PROTEIN"/>
    <property type="match status" value="1"/>
</dbReference>
<dbReference type="Pfam" id="PF08443">
    <property type="entry name" value="RimK"/>
    <property type="match status" value="1"/>
</dbReference>
<dbReference type="Pfam" id="PF18030">
    <property type="entry name" value="Rimk_N"/>
    <property type="match status" value="1"/>
</dbReference>
<dbReference type="SUPFAM" id="SSF56059">
    <property type="entry name" value="Glutathione synthetase ATP-binding domain-like"/>
    <property type="match status" value="1"/>
</dbReference>
<dbReference type="PROSITE" id="PS50975">
    <property type="entry name" value="ATP_GRASP"/>
    <property type="match status" value="1"/>
</dbReference>
<gene>
    <name evidence="1" type="primary">rimK</name>
    <name type="ordered locus">XCV3367</name>
</gene>
<feature type="chain" id="PRO_0000205495" description="Probable alpha-L-glutamate ligase">
    <location>
        <begin position="1"/>
        <end position="295"/>
    </location>
</feature>
<feature type="domain" description="ATP-grasp" evidence="1">
    <location>
        <begin position="104"/>
        <end position="287"/>
    </location>
</feature>
<feature type="binding site" evidence="1">
    <location>
        <position position="141"/>
    </location>
    <ligand>
        <name>ATP</name>
        <dbReference type="ChEBI" id="CHEBI:30616"/>
    </ligand>
</feature>
<feature type="binding site" evidence="1">
    <location>
        <begin position="178"/>
        <end position="179"/>
    </location>
    <ligand>
        <name>ATP</name>
        <dbReference type="ChEBI" id="CHEBI:30616"/>
    </ligand>
</feature>
<feature type="binding site" evidence="1">
    <location>
        <position position="187"/>
    </location>
    <ligand>
        <name>ATP</name>
        <dbReference type="ChEBI" id="CHEBI:30616"/>
    </ligand>
</feature>
<feature type="binding site" evidence="1">
    <location>
        <begin position="211"/>
        <end position="213"/>
    </location>
    <ligand>
        <name>ATP</name>
        <dbReference type="ChEBI" id="CHEBI:30616"/>
    </ligand>
</feature>
<feature type="binding site" evidence="1">
    <location>
        <position position="248"/>
    </location>
    <ligand>
        <name>Mg(2+)</name>
        <dbReference type="ChEBI" id="CHEBI:18420"/>
        <label>1</label>
    </ligand>
</feature>
<feature type="binding site" evidence="1">
    <location>
        <position position="248"/>
    </location>
    <ligand>
        <name>Mn(2+)</name>
        <dbReference type="ChEBI" id="CHEBI:29035"/>
        <label>1</label>
    </ligand>
</feature>
<feature type="binding site" evidence="1">
    <location>
        <position position="260"/>
    </location>
    <ligand>
        <name>Mg(2+)</name>
        <dbReference type="ChEBI" id="CHEBI:18420"/>
        <label>1</label>
    </ligand>
</feature>
<feature type="binding site" evidence="1">
    <location>
        <position position="260"/>
    </location>
    <ligand>
        <name>Mg(2+)</name>
        <dbReference type="ChEBI" id="CHEBI:18420"/>
        <label>2</label>
    </ligand>
</feature>
<feature type="binding site" evidence="1">
    <location>
        <position position="260"/>
    </location>
    <ligand>
        <name>Mn(2+)</name>
        <dbReference type="ChEBI" id="CHEBI:29035"/>
        <label>1</label>
    </ligand>
</feature>
<feature type="binding site" evidence="1">
    <location>
        <position position="260"/>
    </location>
    <ligand>
        <name>Mn(2+)</name>
        <dbReference type="ChEBI" id="CHEBI:29035"/>
        <label>2</label>
    </ligand>
</feature>
<feature type="binding site" evidence="1">
    <location>
        <position position="262"/>
    </location>
    <ligand>
        <name>Mg(2+)</name>
        <dbReference type="ChEBI" id="CHEBI:18420"/>
        <label>2</label>
    </ligand>
</feature>
<feature type="binding site" evidence="1">
    <location>
        <position position="262"/>
    </location>
    <ligand>
        <name>Mn(2+)</name>
        <dbReference type="ChEBI" id="CHEBI:29035"/>
        <label>2</label>
    </ligand>
</feature>
<keyword id="KW-0067">ATP-binding</keyword>
<keyword id="KW-0436">Ligase</keyword>
<keyword id="KW-0460">Magnesium</keyword>
<keyword id="KW-0464">Manganese</keyword>
<keyword id="KW-0479">Metal-binding</keyword>
<keyword id="KW-0547">Nucleotide-binding</keyword>
<keyword id="KW-0648">Protein biosynthesis</keyword>
<name>RIMK_XANE5</name>
<sequence length="295" mass="31637">MKIAILSRNSKLYSTRRLIEAGRKRGHTVRILDPLRCYMRIAADGFSLHYKGKPITGFDAVIPRIGASVTRYATAVLRQLEFMGTYTPNPSDAILRSRDKLRAHQLLAAQGIDMPVTVFGDNPDDTQDLLSMLGPPPHVVKLNEGAQGAGVILTEKASASRGVVEALRGLYANFIVQEFIGEAEGADLRCFVVGDKVVAAMRRQAAEGDFRSNLHLGGTAAVTEATEQEQEVAVRSARALGLTVAGVDLIRSKRGPLVLEVNSTPGLEGVEGVCGVDVAAAIVQHLEQSVRRSAG</sequence>
<organism>
    <name type="scientific">Xanthomonas euvesicatoria pv. vesicatoria (strain 85-10)</name>
    <name type="common">Xanthomonas campestris pv. vesicatoria</name>
    <dbReference type="NCBI Taxonomy" id="316273"/>
    <lineage>
        <taxon>Bacteria</taxon>
        <taxon>Pseudomonadati</taxon>
        <taxon>Pseudomonadota</taxon>
        <taxon>Gammaproteobacteria</taxon>
        <taxon>Lysobacterales</taxon>
        <taxon>Lysobacteraceae</taxon>
        <taxon>Xanthomonas</taxon>
    </lineage>
</organism>
<evidence type="ECO:0000255" key="1">
    <source>
        <dbReference type="HAMAP-Rule" id="MF_01552"/>
    </source>
</evidence>
<reference key="1">
    <citation type="journal article" date="2005" name="J. Bacteriol.">
        <title>Insights into genome plasticity and pathogenicity of the plant pathogenic Bacterium Xanthomonas campestris pv. vesicatoria revealed by the complete genome sequence.</title>
        <authorList>
            <person name="Thieme F."/>
            <person name="Koebnik R."/>
            <person name="Bekel T."/>
            <person name="Berger C."/>
            <person name="Boch J."/>
            <person name="Buettner D."/>
            <person name="Caldana C."/>
            <person name="Gaigalat L."/>
            <person name="Goesmann A."/>
            <person name="Kay S."/>
            <person name="Kirchner O."/>
            <person name="Lanz C."/>
            <person name="Linke B."/>
            <person name="McHardy A.C."/>
            <person name="Meyer F."/>
            <person name="Mittenhuber G."/>
            <person name="Nies D.H."/>
            <person name="Niesbach-Kloesgen U."/>
            <person name="Patschkowski T."/>
            <person name="Rueckert C."/>
            <person name="Rupp O."/>
            <person name="Schneiker S."/>
            <person name="Schuster S.C."/>
            <person name="Vorhoelter F.J."/>
            <person name="Weber E."/>
            <person name="Puehler A."/>
            <person name="Bonas U."/>
            <person name="Bartels D."/>
            <person name="Kaiser O."/>
        </authorList>
    </citation>
    <scope>NUCLEOTIDE SEQUENCE [LARGE SCALE GENOMIC DNA]</scope>
    <source>
        <strain>85-10</strain>
    </source>
</reference>
<accession>Q3BQ65</accession>
<proteinExistence type="inferred from homology"/>